<evidence type="ECO:0000250" key="1">
    <source>
        <dbReference type="UniProtKB" id="Q9M156"/>
    </source>
</evidence>
<evidence type="ECO:0000269" key="2">
    <source>
    </source>
</evidence>
<evidence type="ECO:0000303" key="3">
    <source>
    </source>
</evidence>
<evidence type="ECO:0000305" key="4"/>
<name>UGT12_PANGI</name>
<accession>A0A0K0PVL0</accession>
<comment type="function">
    <text evidence="2">Probable component of the triterpene saponins (e.g. ginsenosides) biosynthetic pathway (PubMed:26032089). No detectable activity toward protopanaxatriol (PPT) (PubMed:26032089).</text>
</comment>
<comment type="pathway">
    <text evidence="4">Secondary metabolite biosynthesis; terpenoid biosynthesis.</text>
</comment>
<comment type="similarity">
    <text evidence="4">Belongs to the UDP-glycosyltransferase family.</text>
</comment>
<organism>
    <name type="scientific">Panax ginseng</name>
    <name type="common">Korean ginseng</name>
    <dbReference type="NCBI Taxonomy" id="4054"/>
    <lineage>
        <taxon>Eukaryota</taxon>
        <taxon>Viridiplantae</taxon>
        <taxon>Streptophyta</taxon>
        <taxon>Embryophyta</taxon>
        <taxon>Tracheophyta</taxon>
        <taxon>Spermatophyta</taxon>
        <taxon>Magnoliopsida</taxon>
        <taxon>eudicotyledons</taxon>
        <taxon>Gunneridae</taxon>
        <taxon>Pentapetalae</taxon>
        <taxon>asterids</taxon>
        <taxon>campanulids</taxon>
        <taxon>Apiales</taxon>
        <taxon>Araliaceae</taxon>
        <taxon>Panax</taxon>
    </lineage>
</organism>
<dbReference type="EC" id="2.4.1.-" evidence="4"/>
<dbReference type="EMBL" id="KP795115">
    <property type="protein sequence ID" value="AKQ76390.1"/>
    <property type="molecule type" value="mRNA"/>
</dbReference>
<dbReference type="SMR" id="A0A0K0PVL0"/>
<dbReference type="UniPathway" id="UPA00213"/>
<dbReference type="GO" id="GO:0035251">
    <property type="term" value="F:UDP-glucosyltransferase activity"/>
    <property type="evidence" value="ECO:0007669"/>
    <property type="project" value="InterPro"/>
</dbReference>
<dbReference type="GO" id="GO:0016114">
    <property type="term" value="P:terpenoid biosynthetic process"/>
    <property type="evidence" value="ECO:0007669"/>
    <property type="project" value="UniProtKB-UniPathway"/>
</dbReference>
<dbReference type="CDD" id="cd03784">
    <property type="entry name" value="GT1_Gtf-like"/>
    <property type="match status" value="1"/>
</dbReference>
<dbReference type="FunFam" id="3.40.50.2000:FF:000056">
    <property type="entry name" value="Glycosyltransferase"/>
    <property type="match status" value="1"/>
</dbReference>
<dbReference type="Gene3D" id="3.40.50.2000">
    <property type="entry name" value="Glycogen Phosphorylase B"/>
    <property type="match status" value="2"/>
</dbReference>
<dbReference type="InterPro" id="IPR050481">
    <property type="entry name" value="UDP-glycosyltransf_plant"/>
</dbReference>
<dbReference type="InterPro" id="IPR002213">
    <property type="entry name" value="UDP_glucos_trans"/>
</dbReference>
<dbReference type="InterPro" id="IPR035595">
    <property type="entry name" value="UDP_glycos_trans_CS"/>
</dbReference>
<dbReference type="PANTHER" id="PTHR48048">
    <property type="entry name" value="GLYCOSYLTRANSFERASE"/>
    <property type="match status" value="1"/>
</dbReference>
<dbReference type="PANTHER" id="PTHR48048:SF45">
    <property type="entry name" value="GLYCOSYLTRANSFERASE"/>
    <property type="match status" value="1"/>
</dbReference>
<dbReference type="Pfam" id="PF00201">
    <property type="entry name" value="UDPGT"/>
    <property type="match status" value="1"/>
</dbReference>
<dbReference type="SUPFAM" id="SSF53756">
    <property type="entry name" value="UDP-Glycosyltransferase/glycogen phosphorylase"/>
    <property type="match status" value="1"/>
</dbReference>
<dbReference type="PROSITE" id="PS00375">
    <property type="entry name" value="UDPGT"/>
    <property type="match status" value="1"/>
</dbReference>
<feature type="chain" id="PRO_0000446967" description="UDP-glucosyltransferase 102">
    <location>
        <begin position="1"/>
        <end position="475"/>
    </location>
</feature>
<feature type="binding site" evidence="1">
    <location>
        <position position="278"/>
    </location>
    <ligand>
        <name>UDP-alpha-D-glucose</name>
        <dbReference type="ChEBI" id="CHEBI:58885"/>
    </ligand>
</feature>
<feature type="binding site" evidence="1">
    <location>
        <begin position="344"/>
        <end position="345"/>
    </location>
    <ligand>
        <name>UDP-alpha-D-glucose</name>
        <dbReference type="ChEBI" id="CHEBI:58885"/>
    </ligand>
</feature>
<feature type="binding site" evidence="1">
    <location>
        <begin position="362"/>
        <end position="370"/>
    </location>
    <ligand>
        <name>UDP-alpha-D-glucose</name>
        <dbReference type="ChEBI" id="CHEBI:58885"/>
    </ligand>
</feature>
<feature type="binding site" evidence="1">
    <location>
        <begin position="384"/>
        <end position="387"/>
    </location>
    <ligand>
        <name>UDP-alpha-D-glucose</name>
        <dbReference type="ChEBI" id="CHEBI:58885"/>
    </ligand>
</feature>
<feature type="mutagenesis site" description="Gained ability to transfer a glucose residue to the C20-OH of protopanaxatriol (PPT)." evidence="2">
    <original>Y</original>
    <variation>H</variation>
    <location>
        <position position="144"/>
    </location>
</feature>
<proteinExistence type="evidence at protein level"/>
<protein>
    <recommendedName>
        <fullName evidence="3">UDP-glucosyltransferase 102</fullName>
        <shortName evidence="3">UGTPg102</shortName>
        <ecNumber evidence="4">2.4.1.-</ecNumber>
    </recommendedName>
</protein>
<reference key="1">
    <citation type="journal article" date="2015" name="Mol. Plant">
        <title>Characterization of Panax ginseng UDP-glycosyltransferases catalyzing protopanaxatriol and biosyntheses of bioactive ginsenosides F1 and Rh1 in metabolically engineered yeasts.</title>
        <authorList>
            <person name="Wei W."/>
            <person name="Wang P."/>
            <person name="Wei Y."/>
            <person name="Liu Q."/>
            <person name="Yang C."/>
            <person name="Zhao G."/>
            <person name="Yue J."/>
            <person name="Yan X."/>
            <person name="Zhou Z."/>
        </authorList>
    </citation>
    <scope>NUCLEOTIDE SEQUENCE [MRNA]</scope>
    <scope>FUNCTION</scope>
    <scope>MUTAGENESIS OF TYR-144</scope>
</reference>
<sequence>MKSELIFLPAPAIGHLVGMVEMAKLFISRHENLSVTVFISKFYMDTGVDNYNKSLLTNPTPRLTIVNLPETDPQNYMLKPRHAILPSVIETQKTHVRDIISGMTQSESTRVVGLLADLLFINIMDIANEFNVPIYVYSPAGAGYLGLAFHLQTLYDKKQDVTEFRNSDTELLVPGFANPVPAEVLPSMYVDKEGGYDYLFSLFRRCRESKAIIINTFEELEPYAINSLRMDSMIPPIYPVGPILNLNGDGQNSDEAAVILGWLDDQPPSSVVFLCFGSYGTFQENQVKEIAMGLERSGHRFLWALRPSIPKGETKLQLKYSNLEEILPVGFLDRTSCVGKVIGWAPQVAVLGHEAVAGFMSHCGWNSTLESVWFGVPVATWPMYGEQHLNAFEMVKELGLAVEIEVDYKNEYFNTKNDFIVRAEEIETKIKKLMMDEKNSEIRKKVKEMKEKSRVAMSENGSSYNSLAKLFEEIM</sequence>
<gene>
    <name type="primary">UGT102</name>
</gene>
<keyword id="KW-0328">Glycosyltransferase</keyword>
<keyword id="KW-0414">Isoprene biosynthesis</keyword>
<keyword id="KW-0808">Transferase</keyword>